<name>Y3131_MYCTO</name>
<proteinExistence type="evidence at transcript level"/>
<protein>
    <recommendedName>
        <fullName evidence="4">Putative NAD(P)H nitroreductase MT3217</fullName>
    </recommendedName>
</protein>
<comment type="function">
    <text evidence="1">Stimulates pro-inflammatory cytokine expression via TLR2 signaling pathway. Activation of TLR2 results in the phosphorylation and activation of NF-kappa-B. Also induces TLR2 expression. May influence the innate immune responses to facilitate the survival of M.tuberculosis in the granulomatous microenvironment.</text>
</comment>
<comment type="cofactor">
    <cofactor evidence="4">
        <name>FMN</name>
        <dbReference type="ChEBI" id="CHEBI:58210"/>
    </cofactor>
</comment>
<comment type="subunit">
    <text evidence="1">Interacts with human TLR2.</text>
</comment>
<comment type="induction">
    <text evidence="3">A member of the dormancy regulon. Induced in response to reduced oxygen tension (hypoxia) and low levels of nitric oxide (NO).</text>
</comment>
<comment type="similarity">
    <text evidence="4">Belongs to the nitroreductase family.</text>
</comment>
<organism>
    <name type="scientific">Mycobacterium tuberculosis (strain CDC 1551 / Oshkosh)</name>
    <dbReference type="NCBI Taxonomy" id="83331"/>
    <lineage>
        <taxon>Bacteria</taxon>
        <taxon>Bacillati</taxon>
        <taxon>Actinomycetota</taxon>
        <taxon>Actinomycetes</taxon>
        <taxon>Mycobacteriales</taxon>
        <taxon>Mycobacteriaceae</taxon>
        <taxon>Mycobacterium</taxon>
        <taxon>Mycobacterium tuberculosis complex</taxon>
    </lineage>
</organism>
<reference key="1">
    <citation type="journal article" date="2002" name="J. Bacteriol.">
        <title>Whole-genome comparison of Mycobacterium tuberculosis clinical and laboratory strains.</title>
        <authorList>
            <person name="Fleischmann R.D."/>
            <person name="Alland D."/>
            <person name="Eisen J.A."/>
            <person name="Carpenter L."/>
            <person name="White O."/>
            <person name="Peterson J.D."/>
            <person name="DeBoy R.T."/>
            <person name="Dodson R.J."/>
            <person name="Gwinn M.L."/>
            <person name="Haft D.H."/>
            <person name="Hickey E.K."/>
            <person name="Kolonay J.F."/>
            <person name="Nelson W.C."/>
            <person name="Umayam L.A."/>
            <person name="Ermolaeva M.D."/>
            <person name="Salzberg S.L."/>
            <person name="Delcher A."/>
            <person name="Utterback T.R."/>
            <person name="Weidman J.F."/>
            <person name="Khouri H.M."/>
            <person name="Gill J."/>
            <person name="Mikula A."/>
            <person name="Bishai W."/>
            <person name="Jacobs W.R. Jr."/>
            <person name="Venter J.C."/>
            <person name="Fraser C.M."/>
        </authorList>
    </citation>
    <scope>NUCLEOTIDE SEQUENCE [LARGE SCALE GENOMIC DNA]</scope>
    <source>
        <strain>CDC 1551 / Oshkosh</strain>
    </source>
</reference>
<reference key="2">
    <citation type="journal article" date="2003" name="J. Exp. Med.">
        <title>Inhibition of respiration by nitric oxide induces a Mycobacterium tuberculosis dormancy program.</title>
        <authorList>
            <person name="Voskuil M.I."/>
            <person name="Schnappinger D."/>
            <person name="Visconti K.C."/>
            <person name="Harrell M.I."/>
            <person name="Dolganov G.M."/>
            <person name="Sherman D.R."/>
            <person name="Schoolnik G.K."/>
        </authorList>
    </citation>
    <scope>INDUCTION BY NITRIC OXIDE (NO) AND BY HYPOXIA</scope>
    <scope>DORMANCY REGULON</scope>
    <source>
        <strain>CDC 1551 / Oshkosh</strain>
    </source>
</reference>
<feature type="chain" id="PRO_0000427918" description="Putative NAD(P)H nitroreductase MT3217">
    <location>
        <begin position="1"/>
        <end position="344"/>
    </location>
</feature>
<feature type="binding site" evidence="2">
    <location>
        <begin position="40"/>
        <end position="44"/>
    </location>
    <ligand>
        <name>FMN</name>
        <dbReference type="ChEBI" id="CHEBI:58210"/>
    </ligand>
</feature>
<feature type="binding site" evidence="2">
    <location>
        <position position="326"/>
    </location>
    <ligand>
        <name>FMN</name>
        <dbReference type="ChEBI" id="CHEBI:58210"/>
    </ligand>
</feature>
<evidence type="ECO:0000250" key="1">
    <source>
        <dbReference type="UniProtKB" id="P9WIZ7"/>
    </source>
</evidence>
<evidence type="ECO:0000255" key="2"/>
<evidence type="ECO:0000269" key="3">
    <source>
    </source>
</evidence>
<evidence type="ECO:0000305" key="4"/>
<accession>P9WIZ6</accession>
<accession>L0TD88</accession>
<accession>P95195</accession>
<accession>Q7D627</accession>
<gene>
    <name type="ordered locus">MT3217</name>
</gene>
<dbReference type="EMBL" id="AE000516">
    <property type="protein sequence ID" value="AAK47555.1"/>
    <property type="molecule type" value="Genomic_DNA"/>
</dbReference>
<dbReference type="PIR" id="D70645">
    <property type="entry name" value="D70645"/>
</dbReference>
<dbReference type="SMR" id="P9WIZ6"/>
<dbReference type="KEGG" id="mtc:MT3217"/>
<dbReference type="HOGENOM" id="CLU_051479_1_0_11"/>
<dbReference type="Proteomes" id="UP000001020">
    <property type="component" value="Chromosome"/>
</dbReference>
<dbReference type="GO" id="GO:0016491">
    <property type="term" value="F:oxidoreductase activity"/>
    <property type="evidence" value="ECO:0007669"/>
    <property type="project" value="UniProtKB-KW"/>
</dbReference>
<dbReference type="Gene3D" id="3.40.109.10">
    <property type="entry name" value="NADH Oxidase"/>
    <property type="match status" value="2"/>
</dbReference>
<dbReference type="InterPro" id="IPR000415">
    <property type="entry name" value="Nitroreductase-like"/>
</dbReference>
<dbReference type="InterPro" id="IPR050627">
    <property type="entry name" value="Nitroreductase/BluB"/>
</dbReference>
<dbReference type="NCBIfam" id="NF047509">
    <property type="entry name" value="Rv3131_FMN_oxido"/>
    <property type="match status" value="1"/>
</dbReference>
<dbReference type="PANTHER" id="PTHR23026:SF123">
    <property type="entry name" value="NAD(P)H NITROREDUCTASE RV3131-RELATED"/>
    <property type="match status" value="1"/>
</dbReference>
<dbReference type="PANTHER" id="PTHR23026">
    <property type="entry name" value="NADPH NITROREDUCTASE"/>
    <property type="match status" value="1"/>
</dbReference>
<dbReference type="SUPFAM" id="SSF55469">
    <property type="entry name" value="FMN-dependent nitroreductase-like"/>
    <property type="match status" value="1"/>
</dbReference>
<sequence length="344" mass="37049">MTAAVDGKGPAAMNTHFPDAETVRTVLTLAVRAPSIHNTQPWRWRVCPTSLELFSRPDMQLRSTDPDGRELILSCGVALHHCVVALASLGWQAKVNRFPDPKDRCHLATIGVQPLVPDQADVALAAAIPRRRTDRRAYSCWPVPGGDIALMAARAARGGVMLRQVSALDRMKAIVAQAVLDHVTDEEYLRELTIWSGRYGSVAGVPARNEPPSDPSAPIPGRLFAGPGLSQPSDVLPADDGAAILALGTETDDRLARLRAGEAASIVLLTATAMGLACCPITEPLEIAKTRDAVRAEVFGAGGYPQMLLRVGWAPINADPLPPTPRRELSQVVEWPEELLRQRC</sequence>
<keyword id="KW-0285">Flavoprotein</keyword>
<keyword id="KW-0288">FMN</keyword>
<keyword id="KW-0520">NAD</keyword>
<keyword id="KW-0521">NADP</keyword>
<keyword id="KW-0560">Oxidoreductase</keyword>
<keyword id="KW-1185">Reference proteome</keyword>
<keyword id="KW-0843">Virulence</keyword>